<name>RL23_STRS2</name>
<feature type="chain" id="PRO_1000068174" description="Large ribosomal subunit protein uL23">
    <location>
        <begin position="1"/>
        <end position="99"/>
    </location>
</feature>
<gene>
    <name evidence="1" type="primary">rplW</name>
    <name type="ordered locus">SSU98_0074</name>
</gene>
<protein>
    <recommendedName>
        <fullName evidence="1">Large ribosomal subunit protein uL23</fullName>
    </recommendedName>
    <alternativeName>
        <fullName evidence="2">50S ribosomal protein L23</fullName>
    </alternativeName>
</protein>
<comment type="function">
    <text evidence="1">One of the early assembly proteins it binds 23S rRNA. One of the proteins that surrounds the polypeptide exit tunnel on the outside of the ribosome. Forms the main docking site for trigger factor binding to the ribosome.</text>
</comment>
<comment type="subunit">
    <text evidence="1">Part of the 50S ribosomal subunit. Contacts protein L29, and trigger factor when it is bound to the ribosome.</text>
</comment>
<comment type="similarity">
    <text evidence="1">Belongs to the universal ribosomal protein uL23 family.</text>
</comment>
<dbReference type="EMBL" id="CP000408">
    <property type="protein sequence ID" value="ABP91234.1"/>
    <property type="molecule type" value="Genomic_DNA"/>
</dbReference>
<dbReference type="SMR" id="A4VYP5"/>
<dbReference type="KEGG" id="ssv:SSU98_0074"/>
<dbReference type="HOGENOM" id="CLU_037562_3_2_9"/>
<dbReference type="GO" id="GO:1990904">
    <property type="term" value="C:ribonucleoprotein complex"/>
    <property type="evidence" value="ECO:0007669"/>
    <property type="project" value="UniProtKB-KW"/>
</dbReference>
<dbReference type="GO" id="GO:0005840">
    <property type="term" value="C:ribosome"/>
    <property type="evidence" value="ECO:0007669"/>
    <property type="project" value="UniProtKB-KW"/>
</dbReference>
<dbReference type="GO" id="GO:0019843">
    <property type="term" value="F:rRNA binding"/>
    <property type="evidence" value="ECO:0007669"/>
    <property type="project" value="UniProtKB-UniRule"/>
</dbReference>
<dbReference type="GO" id="GO:0003735">
    <property type="term" value="F:structural constituent of ribosome"/>
    <property type="evidence" value="ECO:0007669"/>
    <property type="project" value="InterPro"/>
</dbReference>
<dbReference type="GO" id="GO:0006412">
    <property type="term" value="P:translation"/>
    <property type="evidence" value="ECO:0007669"/>
    <property type="project" value="UniProtKB-UniRule"/>
</dbReference>
<dbReference type="FunFam" id="3.30.70.330:FF:000001">
    <property type="entry name" value="50S ribosomal protein L23"/>
    <property type="match status" value="1"/>
</dbReference>
<dbReference type="Gene3D" id="3.30.70.330">
    <property type="match status" value="1"/>
</dbReference>
<dbReference type="HAMAP" id="MF_01369_B">
    <property type="entry name" value="Ribosomal_uL23_B"/>
    <property type="match status" value="1"/>
</dbReference>
<dbReference type="InterPro" id="IPR012677">
    <property type="entry name" value="Nucleotide-bd_a/b_plait_sf"/>
</dbReference>
<dbReference type="InterPro" id="IPR013025">
    <property type="entry name" value="Ribosomal_uL23-like"/>
</dbReference>
<dbReference type="InterPro" id="IPR012678">
    <property type="entry name" value="Ribosomal_uL23/eL15/eS24_sf"/>
</dbReference>
<dbReference type="InterPro" id="IPR001014">
    <property type="entry name" value="Ribosomal_uL23_CS"/>
</dbReference>
<dbReference type="NCBIfam" id="NF004361">
    <property type="entry name" value="PRK05738.2-1"/>
    <property type="match status" value="1"/>
</dbReference>
<dbReference type="NCBIfam" id="NF004363">
    <property type="entry name" value="PRK05738.2-4"/>
    <property type="match status" value="1"/>
</dbReference>
<dbReference type="PANTHER" id="PTHR11620">
    <property type="entry name" value="60S RIBOSOMAL PROTEIN L23A"/>
    <property type="match status" value="1"/>
</dbReference>
<dbReference type="Pfam" id="PF00276">
    <property type="entry name" value="Ribosomal_L23"/>
    <property type="match status" value="1"/>
</dbReference>
<dbReference type="SUPFAM" id="SSF54189">
    <property type="entry name" value="Ribosomal proteins S24e, L23 and L15e"/>
    <property type="match status" value="1"/>
</dbReference>
<dbReference type="PROSITE" id="PS00050">
    <property type="entry name" value="RIBOSOMAL_L23"/>
    <property type="match status" value="1"/>
</dbReference>
<sequence length="99" mass="10864">MNLYDVIKKPVITESSMGQLEAGKYVFEVDTRAHKLLIKQAVEAAFEGVKVANVNTINVKPKTKRVGRYVGRTNKVKKAIITLAADSKAIELFATADAE</sequence>
<evidence type="ECO:0000255" key="1">
    <source>
        <dbReference type="HAMAP-Rule" id="MF_01369"/>
    </source>
</evidence>
<evidence type="ECO:0000305" key="2"/>
<proteinExistence type="inferred from homology"/>
<organism>
    <name type="scientific">Streptococcus suis (strain 98HAH33)</name>
    <dbReference type="NCBI Taxonomy" id="391296"/>
    <lineage>
        <taxon>Bacteria</taxon>
        <taxon>Bacillati</taxon>
        <taxon>Bacillota</taxon>
        <taxon>Bacilli</taxon>
        <taxon>Lactobacillales</taxon>
        <taxon>Streptococcaceae</taxon>
        <taxon>Streptococcus</taxon>
    </lineage>
</organism>
<accession>A4VYP5</accession>
<reference key="1">
    <citation type="journal article" date="2007" name="PLoS ONE">
        <title>A glimpse of streptococcal toxic shock syndrome from comparative genomics of S. suis 2 Chinese isolates.</title>
        <authorList>
            <person name="Chen C."/>
            <person name="Tang J."/>
            <person name="Dong W."/>
            <person name="Wang C."/>
            <person name="Feng Y."/>
            <person name="Wang J."/>
            <person name="Zheng F."/>
            <person name="Pan X."/>
            <person name="Liu D."/>
            <person name="Li M."/>
            <person name="Song Y."/>
            <person name="Zhu X."/>
            <person name="Sun H."/>
            <person name="Feng T."/>
            <person name="Guo Z."/>
            <person name="Ju A."/>
            <person name="Ge J."/>
            <person name="Dong Y."/>
            <person name="Sun W."/>
            <person name="Jiang Y."/>
            <person name="Wang J."/>
            <person name="Yan J."/>
            <person name="Yang H."/>
            <person name="Wang X."/>
            <person name="Gao G.F."/>
            <person name="Yang R."/>
            <person name="Wang J."/>
            <person name="Yu J."/>
        </authorList>
    </citation>
    <scope>NUCLEOTIDE SEQUENCE [LARGE SCALE GENOMIC DNA]</scope>
    <source>
        <strain>98HAH33</strain>
    </source>
</reference>
<keyword id="KW-0687">Ribonucleoprotein</keyword>
<keyword id="KW-0689">Ribosomal protein</keyword>
<keyword id="KW-0694">RNA-binding</keyword>
<keyword id="KW-0699">rRNA-binding</keyword>